<accession>Q9I7B1</accession>
<dbReference type="EMBL" id="AE004091">
    <property type="protein sequence ID" value="AAG03405.1"/>
    <property type="molecule type" value="Genomic_DNA"/>
</dbReference>
<dbReference type="PIR" id="D83643">
    <property type="entry name" value="D83643"/>
</dbReference>
<dbReference type="RefSeq" id="NP_248705.1">
    <property type="nucleotide sequence ID" value="NC_002516.2"/>
</dbReference>
<dbReference type="RefSeq" id="WP_003120685.1">
    <property type="nucleotide sequence ID" value="NZ_QZGE01000012.1"/>
</dbReference>
<dbReference type="SMR" id="Q9I7B1"/>
<dbReference type="STRING" id="208964.PA0015"/>
<dbReference type="PaxDb" id="208964-PA0015"/>
<dbReference type="DNASU" id="879251"/>
<dbReference type="GeneID" id="879251"/>
<dbReference type="KEGG" id="pae:PA0015"/>
<dbReference type="PATRIC" id="fig|208964.12.peg.14"/>
<dbReference type="PseudoCAP" id="PA0015"/>
<dbReference type="HOGENOM" id="CLU_146069_2_0_6"/>
<dbReference type="InParanoid" id="Q9I7B1"/>
<dbReference type="OrthoDB" id="8421013at2"/>
<dbReference type="PhylomeDB" id="Q9I7B1"/>
<dbReference type="BioCyc" id="PAER208964:G1FZ6-15-MONOMER"/>
<dbReference type="Proteomes" id="UP000002438">
    <property type="component" value="Chromosome"/>
</dbReference>
<dbReference type="Gene3D" id="1.25.40.10">
    <property type="entry name" value="Tetratricopeptide repeat domain"/>
    <property type="match status" value="1"/>
</dbReference>
<dbReference type="InterPro" id="IPR011990">
    <property type="entry name" value="TPR-like_helical_dom_sf"/>
</dbReference>
<dbReference type="InterPro" id="IPR019734">
    <property type="entry name" value="TPR_rpt"/>
</dbReference>
<dbReference type="Pfam" id="PF14559">
    <property type="entry name" value="TPR_19"/>
    <property type="match status" value="1"/>
</dbReference>
<dbReference type="SMART" id="SM00028">
    <property type="entry name" value="TPR"/>
    <property type="match status" value="2"/>
</dbReference>
<dbReference type="SUPFAM" id="SSF48452">
    <property type="entry name" value="TPR-like"/>
    <property type="match status" value="1"/>
</dbReference>
<dbReference type="PROSITE" id="PS50005">
    <property type="entry name" value="TPR"/>
    <property type="match status" value="2"/>
</dbReference>
<dbReference type="PROSITE" id="PS50293">
    <property type="entry name" value="TPR_REGION"/>
    <property type="match status" value="1"/>
</dbReference>
<proteinExistence type="predicted"/>
<feature type="chain" id="PRO_0000287778" description="TPR repeat-containing protein PA0015">
    <location>
        <begin position="1"/>
        <end position="105"/>
    </location>
</feature>
<feature type="repeat" description="TPR 1">
    <location>
        <begin position="17"/>
        <end position="50"/>
    </location>
</feature>
<feature type="repeat" description="TPR 2">
    <location>
        <begin position="52"/>
        <end position="84"/>
    </location>
</feature>
<reference key="1">
    <citation type="journal article" date="2000" name="Nature">
        <title>Complete genome sequence of Pseudomonas aeruginosa PAO1, an opportunistic pathogen.</title>
        <authorList>
            <person name="Stover C.K."/>
            <person name="Pham X.-Q.T."/>
            <person name="Erwin A.L."/>
            <person name="Mizoguchi S.D."/>
            <person name="Warrener P."/>
            <person name="Hickey M.J."/>
            <person name="Brinkman F.S.L."/>
            <person name="Hufnagle W.O."/>
            <person name="Kowalik D.J."/>
            <person name="Lagrou M."/>
            <person name="Garber R.L."/>
            <person name="Goltry L."/>
            <person name="Tolentino E."/>
            <person name="Westbrock-Wadman S."/>
            <person name="Yuan Y."/>
            <person name="Brody L.L."/>
            <person name="Coulter S.N."/>
            <person name="Folger K.R."/>
            <person name="Kas A."/>
            <person name="Larbig K."/>
            <person name="Lim R.M."/>
            <person name="Smith K.A."/>
            <person name="Spencer D.H."/>
            <person name="Wong G.K.-S."/>
            <person name="Wu Z."/>
            <person name="Paulsen I.T."/>
            <person name="Reizer J."/>
            <person name="Saier M.H. Jr."/>
            <person name="Hancock R.E.W."/>
            <person name="Lory S."/>
            <person name="Olson M.V."/>
        </authorList>
    </citation>
    <scope>NUCLEOTIDE SEQUENCE [LARGE SCALE GENOMIC DNA]</scope>
    <source>
        <strain>ATCC 15692 / DSM 22644 / CIP 104116 / JCM 14847 / LMG 12228 / 1C / PRS 101 / PAO1</strain>
    </source>
</reference>
<protein>
    <recommendedName>
        <fullName>TPR repeat-containing protein PA0015</fullName>
    </recommendedName>
</protein>
<gene>
    <name type="ordered locus">PA0015</name>
</gene>
<organism>
    <name type="scientific">Pseudomonas aeruginosa (strain ATCC 15692 / DSM 22644 / CIP 104116 / JCM 14847 / LMG 12228 / 1C / PRS 101 / PAO1)</name>
    <dbReference type="NCBI Taxonomy" id="208964"/>
    <lineage>
        <taxon>Bacteria</taxon>
        <taxon>Pseudomonadati</taxon>
        <taxon>Pseudomonadota</taxon>
        <taxon>Gammaproteobacteria</taxon>
        <taxon>Pseudomonadales</taxon>
        <taxon>Pseudomonadaceae</taxon>
        <taxon>Pseudomonas</taxon>
    </lineage>
</organism>
<keyword id="KW-1185">Reference proteome</keyword>
<keyword id="KW-0677">Repeat</keyword>
<keyword id="KW-0802">TPR repeat</keyword>
<name>Y015_PSEAE</name>
<sequence>MMIEGLEKMLAKGVDNALLRFGLGKGYLDAGDAERAAEHLQRCVEQDPKYSAGWKLLGKARQAAGDLAGARQAWEQGLATAATHGDKQAEKEMTVFLRKLDRART</sequence>